<dbReference type="EC" id="3.4.21.89"/>
<dbReference type="EMBL" id="AC091076">
    <property type="status" value="NOT_ANNOTATED_CDS"/>
    <property type="molecule type" value="Genomic_DNA"/>
</dbReference>
<dbReference type="SMR" id="P0C7V7"/>
<dbReference type="FunCoup" id="P0C7V7">
    <property type="interactions" value="94"/>
</dbReference>
<dbReference type="MEROPS" id="S26.022"/>
<dbReference type="iPTMnet" id="P0C7V7"/>
<dbReference type="PhosphoSitePlus" id="P0C7V7"/>
<dbReference type="BioMuta" id="HGNC:31884"/>
<dbReference type="DMDM" id="206557848"/>
<dbReference type="jPOST" id="P0C7V7"/>
<dbReference type="MassIVE" id="P0C7V7"/>
<dbReference type="PeptideAtlas" id="P0C7V7"/>
<dbReference type="ProteomicsDB" id="52377"/>
<dbReference type="AGR" id="HGNC:31884"/>
<dbReference type="GeneCards" id="SEC11B"/>
<dbReference type="HGNC" id="HGNC:31884">
    <property type="gene designation" value="SEC11B"/>
</dbReference>
<dbReference type="neXtProt" id="NX_P0C7V7"/>
<dbReference type="InParanoid" id="P0C7V7"/>
<dbReference type="PAN-GO" id="P0C7V7">
    <property type="GO annotations" value="3 GO annotations based on evolutionary models"/>
</dbReference>
<dbReference type="SignaLink" id="P0C7V7"/>
<dbReference type="ChiTaRS" id="SEC11B">
    <property type="organism name" value="human"/>
</dbReference>
<dbReference type="Pharos" id="P0C7V7">
    <property type="development level" value="Tdark"/>
</dbReference>
<dbReference type="Proteomes" id="UP000005640">
    <property type="component" value="Unplaced"/>
</dbReference>
<dbReference type="RNAct" id="P0C7V7">
    <property type="molecule type" value="protein"/>
</dbReference>
<dbReference type="GO" id="GO:0005787">
    <property type="term" value="C:signal peptidase complex"/>
    <property type="evidence" value="ECO:0000318"/>
    <property type="project" value="GO_Central"/>
</dbReference>
<dbReference type="GO" id="GO:0008233">
    <property type="term" value="F:peptidase activity"/>
    <property type="evidence" value="ECO:0000318"/>
    <property type="project" value="GO_Central"/>
</dbReference>
<dbReference type="GO" id="GO:0004252">
    <property type="term" value="F:serine-type endopeptidase activity"/>
    <property type="evidence" value="ECO:0007669"/>
    <property type="project" value="UniProtKB-EC"/>
</dbReference>
<dbReference type="GO" id="GO:0006465">
    <property type="term" value="P:signal peptide processing"/>
    <property type="evidence" value="ECO:0000318"/>
    <property type="project" value="GO_Central"/>
</dbReference>
<dbReference type="CDD" id="cd06530">
    <property type="entry name" value="S26_SPase_I"/>
    <property type="match status" value="1"/>
</dbReference>
<dbReference type="FunFam" id="2.10.109.10:FF:000003">
    <property type="entry name" value="Signal peptidase complex catalytic subunit SEC11"/>
    <property type="match status" value="1"/>
</dbReference>
<dbReference type="InterPro" id="IPR036286">
    <property type="entry name" value="LexA/Signal_pep-like_sf"/>
</dbReference>
<dbReference type="InterPro" id="IPR019758">
    <property type="entry name" value="Pept_S26A_signal_pept_1_CS"/>
</dbReference>
<dbReference type="InterPro" id="IPR019533">
    <property type="entry name" value="Peptidase_S26"/>
</dbReference>
<dbReference type="InterPro" id="IPR001733">
    <property type="entry name" value="Peptidase_S26B"/>
</dbReference>
<dbReference type="NCBIfam" id="TIGR02228">
    <property type="entry name" value="sigpep_I_arch"/>
    <property type="match status" value="1"/>
</dbReference>
<dbReference type="PANTHER" id="PTHR10806">
    <property type="entry name" value="SIGNAL PEPTIDASE COMPLEX CATALYTIC SUBUNIT SEC11"/>
    <property type="match status" value="1"/>
</dbReference>
<dbReference type="PANTHER" id="PTHR10806:SF28">
    <property type="entry name" value="SIGNAL PEPTIDASE COMPLEX CATALYTIC SUBUNIT SEC11B-RELATED"/>
    <property type="match status" value="1"/>
</dbReference>
<dbReference type="PRINTS" id="PR00728">
    <property type="entry name" value="SIGNALPTASE"/>
</dbReference>
<dbReference type="SUPFAM" id="SSF51306">
    <property type="entry name" value="LexA/Signal peptidase"/>
    <property type="match status" value="1"/>
</dbReference>
<dbReference type="PROSITE" id="PS00501">
    <property type="entry name" value="SPASE_I_1"/>
    <property type="match status" value="1"/>
</dbReference>
<dbReference type="PROSITE" id="PS00761">
    <property type="entry name" value="SPASE_I_3"/>
    <property type="match status" value="1"/>
</dbReference>
<name>SC11B_HUMAN</name>
<keyword id="KW-0378">Hydrolase</keyword>
<keyword id="KW-0472">Membrane</keyword>
<keyword id="KW-0645">Protease</keyword>
<keyword id="KW-1185">Reference proteome</keyword>
<keyword id="KW-0735">Signal-anchor</keyword>
<keyword id="KW-0812">Transmembrane</keyword>
<keyword id="KW-1133">Transmembrane helix</keyword>
<accession>P0C7V7</accession>
<proteinExistence type="uncertain"/>
<protein>
    <recommendedName>
        <fullName>Putative signal peptidase complex catalytic subunit SEC11B</fullName>
        <ecNumber>3.4.21.89</ecNumber>
    </recommendedName>
    <alternativeName>
        <fullName>SEC11 homolog B</fullName>
    </alternativeName>
    <alternativeName>
        <fullName>SEC11-like protein 2</fullName>
    </alternativeName>
</protein>
<organism>
    <name type="scientific">Homo sapiens</name>
    <name type="common">Human</name>
    <dbReference type="NCBI Taxonomy" id="9606"/>
    <lineage>
        <taxon>Eukaryota</taxon>
        <taxon>Metazoa</taxon>
        <taxon>Chordata</taxon>
        <taxon>Craniata</taxon>
        <taxon>Vertebrata</taxon>
        <taxon>Euteleostomi</taxon>
        <taxon>Mammalia</taxon>
        <taxon>Eutheria</taxon>
        <taxon>Euarchontoglires</taxon>
        <taxon>Primates</taxon>
        <taxon>Haplorrhini</taxon>
        <taxon>Catarrhini</taxon>
        <taxon>Hominidae</taxon>
        <taxon>Homo</taxon>
    </lineage>
</organism>
<sequence length="166" mass="19160">MNKWRLYYQVLNFGMIVSSALMIWKGLMVITGSESPIVLLSGSMEPAFHRGYLLFLTNRVEDPIRVGEIAVLRIEGRKIPIVHRVLKIHEKQNGHIKFLTKGDNNAVDDRGLYKQDQHWLEKKDVVGRARGFVPYIGIGTSLMNDYPKHKYEVLFLLGLFVLVHRE</sequence>
<comment type="function">
    <text evidence="1">Putative component of some signal peptidase complex which removes signal peptides from nascent proteins as they are translocated into the lumen of the endoplasmic reticulum.</text>
</comment>
<comment type="catalytic activity">
    <reaction>
        <text>Cleavage of hydrophobic, N-terminal signal or leader sequences from secreted and periplasmic proteins.</text>
        <dbReference type="EC" id="3.4.21.89"/>
    </reaction>
</comment>
<comment type="subcellular location">
    <subcellularLocation>
        <location evidence="3">Membrane</location>
        <topology evidence="3">Single-pass type II membrane protein</topology>
    </subcellularLocation>
</comment>
<comment type="similarity">
    <text evidence="3">Belongs to the peptidase S26B family.</text>
</comment>
<comment type="caution">
    <text evidence="3">Could be the product of a pseudogene.</text>
</comment>
<feature type="chain" id="PRO_0000344461" description="Putative signal peptidase complex catalytic subunit SEC11B">
    <location>
        <begin position="1"/>
        <end position="166"/>
    </location>
</feature>
<feature type="topological domain" description="Cytoplasmic" evidence="2">
    <location>
        <begin position="1"/>
        <end position="6"/>
    </location>
</feature>
<feature type="transmembrane region" description="Helical; Signal-anchor for type II membrane protein" evidence="2">
    <location>
        <begin position="7"/>
        <end position="24"/>
    </location>
</feature>
<feature type="topological domain" description="Extracellular" evidence="2">
    <location>
        <begin position="25"/>
        <end position="166"/>
    </location>
</feature>
<feature type="active site" evidence="1">
    <location>
        <position position="43"/>
    </location>
</feature>
<gene>
    <name type="primary">SEC11B</name>
    <name type="synonym">SEC11L2</name>
    <name type="synonym">SPCS4B</name>
</gene>
<evidence type="ECO:0000250" key="1"/>
<evidence type="ECO:0000255" key="2"/>
<evidence type="ECO:0000305" key="3"/>
<reference key="1">
    <citation type="journal article" date="2006" name="Nature">
        <title>DNA sequence and analysis of human chromosome 8.</title>
        <authorList>
            <person name="Nusbaum C."/>
            <person name="Mikkelsen T.S."/>
            <person name="Zody M.C."/>
            <person name="Asakawa S."/>
            <person name="Taudien S."/>
            <person name="Garber M."/>
            <person name="Kodira C.D."/>
            <person name="Schueler M.G."/>
            <person name="Shimizu A."/>
            <person name="Whittaker C.A."/>
            <person name="Chang J.L."/>
            <person name="Cuomo C.A."/>
            <person name="Dewar K."/>
            <person name="FitzGerald M.G."/>
            <person name="Yang X."/>
            <person name="Allen N.R."/>
            <person name="Anderson S."/>
            <person name="Asakawa T."/>
            <person name="Blechschmidt K."/>
            <person name="Bloom T."/>
            <person name="Borowsky M.L."/>
            <person name="Butler J."/>
            <person name="Cook A."/>
            <person name="Corum B."/>
            <person name="DeArellano K."/>
            <person name="DeCaprio D."/>
            <person name="Dooley K.T."/>
            <person name="Dorris L. III"/>
            <person name="Engels R."/>
            <person name="Gloeckner G."/>
            <person name="Hafez N."/>
            <person name="Hagopian D.S."/>
            <person name="Hall J.L."/>
            <person name="Ishikawa S.K."/>
            <person name="Jaffe D.B."/>
            <person name="Kamat A."/>
            <person name="Kudoh J."/>
            <person name="Lehmann R."/>
            <person name="Lokitsang T."/>
            <person name="Macdonald P."/>
            <person name="Major J.E."/>
            <person name="Matthews C.D."/>
            <person name="Mauceli E."/>
            <person name="Menzel U."/>
            <person name="Mihalev A.H."/>
            <person name="Minoshima S."/>
            <person name="Murayama Y."/>
            <person name="Naylor J.W."/>
            <person name="Nicol R."/>
            <person name="Nguyen C."/>
            <person name="O'Leary S.B."/>
            <person name="O'Neill K."/>
            <person name="Parker S.C.J."/>
            <person name="Polley A."/>
            <person name="Raymond C.K."/>
            <person name="Reichwald K."/>
            <person name="Rodriguez J."/>
            <person name="Sasaki T."/>
            <person name="Schilhabel M."/>
            <person name="Siddiqui R."/>
            <person name="Smith C.L."/>
            <person name="Sneddon T.P."/>
            <person name="Talamas J.A."/>
            <person name="Tenzin P."/>
            <person name="Topham K."/>
            <person name="Venkataraman V."/>
            <person name="Wen G."/>
            <person name="Yamazaki S."/>
            <person name="Young S.K."/>
            <person name="Zeng Q."/>
            <person name="Zimmer A.R."/>
            <person name="Rosenthal A."/>
            <person name="Birren B.W."/>
            <person name="Platzer M."/>
            <person name="Shimizu N."/>
            <person name="Lander E.S."/>
        </authorList>
    </citation>
    <scope>NUCLEOTIDE SEQUENCE [LARGE SCALE GENOMIC DNA]</scope>
</reference>